<proteinExistence type="inferred from homology"/>
<keyword id="KW-0004">4Fe-4S</keyword>
<keyword id="KW-0067">ATP-binding</keyword>
<keyword id="KW-0963">Cytoplasm</keyword>
<keyword id="KW-0408">Iron</keyword>
<keyword id="KW-0411">Iron-sulfur</keyword>
<keyword id="KW-0418">Kinase</keyword>
<keyword id="KW-0479">Metal-binding</keyword>
<keyword id="KW-0547">Nucleotide-binding</keyword>
<keyword id="KW-0597">Phosphoprotein</keyword>
<keyword id="KW-0808">Transferase</keyword>
<keyword id="KW-0902">Two-component regulatory system</keyword>
<reference key="1">
    <citation type="journal article" date="2005" name="J. Bacteriol.">
        <title>Whole-genome sequencing of Staphylococcus haemolyticus uncovers the extreme plasticity of its genome and the evolution of human-colonizing staphylococcal species.</title>
        <authorList>
            <person name="Takeuchi F."/>
            <person name="Watanabe S."/>
            <person name="Baba T."/>
            <person name="Yuzawa H."/>
            <person name="Ito T."/>
            <person name="Morimoto Y."/>
            <person name="Kuroda M."/>
            <person name="Cui L."/>
            <person name="Takahashi M."/>
            <person name="Ankai A."/>
            <person name="Baba S."/>
            <person name="Fukui S."/>
            <person name="Lee J.C."/>
            <person name="Hiramatsu K."/>
        </authorList>
    </citation>
    <scope>NUCLEOTIDE SEQUENCE [LARGE SCALE GENOMIC DNA]</scope>
    <source>
        <strain>JCSC1435</strain>
    </source>
</reference>
<dbReference type="EC" id="2.7.13.3"/>
<dbReference type="EMBL" id="AP006716">
    <property type="protein sequence ID" value="BAE03968.1"/>
    <property type="molecule type" value="Genomic_DNA"/>
</dbReference>
<dbReference type="RefSeq" id="WP_011274984.1">
    <property type="nucleotide sequence ID" value="NC_007168.1"/>
</dbReference>
<dbReference type="SMR" id="Q4L8Q7"/>
<dbReference type="GeneID" id="93780054"/>
<dbReference type="KEGG" id="sha:SH0659"/>
<dbReference type="eggNOG" id="COG4585">
    <property type="taxonomic scope" value="Bacteria"/>
</dbReference>
<dbReference type="HOGENOM" id="CLU_000445_114_0_9"/>
<dbReference type="OrthoDB" id="9760839at2"/>
<dbReference type="Proteomes" id="UP000000543">
    <property type="component" value="Chromosome"/>
</dbReference>
<dbReference type="GO" id="GO:0005737">
    <property type="term" value="C:cytoplasm"/>
    <property type="evidence" value="ECO:0007669"/>
    <property type="project" value="UniProtKB-SubCell"/>
</dbReference>
<dbReference type="GO" id="GO:0016020">
    <property type="term" value="C:membrane"/>
    <property type="evidence" value="ECO:0007669"/>
    <property type="project" value="InterPro"/>
</dbReference>
<dbReference type="GO" id="GO:0051539">
    <property type="term" value="F:4 iron, 4 sulfur cluster binding"/>
    <property type="evidence" value="ECO:0007669"/>
    <property type="project" value="UniProtKB-KW"/>
</dbReference>
<dbReference type="GO" id="GO:0005524">
    <property type="term" value="F:ATP binding"/>
    <property type="evidence" value="ECO:0007669"/>
    <property type="project" value="UniProtKB-KW"/>
</dbReference>
<dbReference type="GO" id="GO:0005506">
    <property type="term" value="F:iron ion binding"/>
    <property type="evidence" value="ECO:0007669"/>
    <property type="project" value="InterPro"/>
</dbReference>
<dbReference type="GO" id="GO:0000155">
    <property type="term" value="F:phosphorelay sensor kinase activity"/>
    <property type="evidence" value="ECO:0007669"/>
    <property type="project" value="InterPro"/>
</dbReference>
<dbReference type="GO" id="GO:0046983">
    <property type="term" value="F:protein dimerization activity"/>
    <property type="evidence" value="ECO:0007669"/>
    <property type="project" value="InterPro"/>
</dbReference>
<dbReference type="CDD" id="cd16917">
    <property type="entry name" value="HATPase_UhpB-NarQ-NarX-like"/>
    <property type="match status" value="1"/>
</dbReference>
<dbReference type="Gene3D" id="1.20.5.1930">
    <property type="match status" value="1"/>
</dbReference>
<dbReference type="Gene3D" id="3.30.565.10">
    <property type="entry name" value="Histidine kinase-like ATPase, C-terminal domain"/>
    <property type="match status" value="1"/>
</dbReference>
<dbReference type="InterPro" id="IPR036890">
    <property type="entry name" value="HATPase_C_sf"/>
</dbReference>
<dbReference type="InterPro" id="IPR005467">
    <property type="entry name" value="His_kinase_dom"/>
</dbReference>
<dbReference type="InterPro" id="IPR050482">
    <property type="entry name" value="Sensor_HK_TwoCompSys"/>
</dbReference>
<dbReference type="InterPro" id="IPR004358">
    <property type="entry name" value="Sig_transdc_His_kin-like_C"/>
</dbReference>
<dbReference type="InterPro" id="IPR011712">
    <property type="entry name" value="Sig_transdc_His_kin_sub3_dim/P"/>
</dbReference>
<dbReference type="InterPro" id="IPR017203">
    <property type="entry name" value="Sig_transdc_His_kinase_NreB"/>
</dbReference>
<dbReference type="PANTHER" id="PTHR24421">
    <property type="entry name" value="NITRATE/NITRITE SENSOR PROTEIN NARX-RELATED"/>
    <property type="match status" value="1"/>
</dbReference>
<dbReference type="PANTHER" id="PTHR24421:SF10">
    <property type="entry name" value="NITRATE_NITRITE SENSOR PROTEIN NARQ"/>
    <property type="match status" value="1"/>
</dbReference>
<dbReference type="Pfam" id="PF02518">
    <property type="entry name" value="HATPase_c"/>
    <property type="match status" value="1"/>
</dbReference>
<dbReference type="Pfam" id="PF07730">
    <property type="entry name" value="HisKA_3"/>
    <property type="match status" value="1"/>
</dbReference>
<dbReference type="PIRSF" id="PIRSF037432">
    <property type="entry name" value="STHK_NreB"/>
    <property type="match status" value="1"/>
</dbReference>
<dbReference type="PRINTS" id="PR00344">
    <property type="entry name" value="BCTRLSENSOR"/>
</dbReference>
<dbReference type="SMART" id="SM00387">
    <property type="entry name" value="HATPase_c"/>
    <property type="match status" value="1"/>
</dbReference>
<dbReference type="SUPFAM" id="SSF55874">
    <property type="entry name" value="ATPase domain of HSP90 chaperone/DNA topoisomerase II/histidine kinase"/>
    <property type="match status" value="1"/>
</dbReference>
<dbReference type="PROSITE" id="PS50109">
    <property type="entry name" value="HIS_KIN"/>
    <property type="match status" value="1"/>
</dbReference>
<gene>
    <name type="primary">nreB</name>
    <name type="ordered locus">SH0659</name>
</gene>
<evidence type="ECO:0000250" key="1"/>
<evidence type="ECO:0000255" key="2"/>
<evidence type="ECO:0000255" key="3">
    <source>
        <dbReference type="PROSITE-ProRule" id="PRU00107"/>
    </source>
</evidence>
<evidence type="ECO:0000305" key="4"/>
<comment type="function">
    <text evidence="1">Member of the two-component regulatory system NreB/NreC involved in the control of dissimilatory nitrate/nitrite reduction in response to oxygen. NreB functions as a direct oxygen sensor histidine kinase which is autophosphorylated, in the absence of oxygen, probably at the conserved histidine residue, and transfers its phosphate group probably to a conserved aspartate residue of NreC. NreB/NreC activates the expression of the nitrate (narGHJI) and nitrite (nir) reductase operons, as well as the putative nitrate transporter gene narT (By similarity).</text>
</comment>
<comment type="catalytic activity">
    <reaction>
        <text>ATP + protein L-histidine = ADP + protein N-phospho-L-histidine.</text>
        <dbReference type="EC" id="2.7.13.3"/>
    </reaction>
</comment>
<comment type="cofactor">
    <cofactor evidence="4">
        <name>[4Fe-4S] cluster</name>
        <dbReference type="ChEBI" id="CHEBI:49883"/>
    </cofactor>
    <text evidence="4">Binds 1 [4Fe-4S] cluster.</text>
</comment>
<comment type="subcellular location">
    <subcellularLocation>
        <location evidence="4">Cytoplasm</location>
    </subcellularLocation>
</comment>
<comment type="PTM">
    <text evidence="1">Autophosphorylated.</text>
</comment>
<accession>Q4L8Q7</accession>
<organism>
    <name type="scientific">Staphylococcus haemolyticus (strain JCSC1435)</name>
    <dbReference type="NCBI Taxonomy" id="279808"/>
    <lineage>
        <taxon>Bacteria</taxon>
        <taxon>Bacillati</taxon>
        <taxon>Bacillota</taxon>
        <taxon>Bacilli</taxon>
        <taxon>Bacillales</taxon>
        <taxon>Staphylococcaceae</taxon>
        <taxon>Staphylococcus</taxon>
    </lineage>
</organism>
<protein>
    <recommendedName>
        <fullName>Oxygen sensor histidine kinase NreB</fullName>
        <ecNumber>2.7.13.3</ecNumber>
    </recommendedName>
    <alternativeName>
        <fullName>Nitrogen regulation protein B</fullName>
    </alternativeName>
</protein>
<name>NREB_STAHJ</name>
<sequence length="344" mass="39532">MLDVDNLDLENLLKKYYEKTNEKIVFVNKDGKVIAMNDAAEEIISKDNNYSAMTNAICNRCEGYSNEFALQSCINCYLDTTKPNDMNFQVFMKTVDNKIQPFTASYQCIDDEAQIYAFTLQDISPQIERQEKMYQRQMLRKTIAAQENERKRISRELHDSVVQEMLNVDVELRLLKYQQDMAQLIEKSEHIELLMSNLINDIRDLSVELRPSSLDDLGLEAAFKSYFKQLEYNYGLNVVYQSNIQTIRFDSEIETVVYRVVQEAIFNALKYAGVYEVEVTIQQTEEGLIAEIIDRGKGFDPNLKPQGTGLGLYGMNERAELVKGTVNIETHIGKGTIITLEVPV</sequence>
<feature type="chain" id="PRO_0000349341" description="Oxygen sensor histidine kinase NreB">
    <location>
        <begin position="1"/>
        <end position="344"/>
    </location>
</feature>
<feature type="domain" description="Histidine kinase" evidence="3">
    <location>
        <begin position="147"/>
        <end position="344"/>
    </location>
</feature>
<feature type="binding site" evidence="2">
    <location>
        <position position="58"/>
    </location>
    <ligand>
        <name>[4Fe-4S] cluster</name>
        <dbReference type="ChEBI" id="CHEBI:49883"/>
    </ligand>
</feature>
<feature type="binding site" evidence="2">
    <location>
        <position position="61"/>
    </location>
    <ligand>
        <name>[4Fe-4S] cluster</name>
        <dbReference type="ChEBI" id="CHEBI:49883"/>
    </ligand>
</feature>
<feature type="binding site" evidence="2">
    <location>
        <position position="73"/>
    </location>
    <ligand>
        <name>[4Fe-4S] cluster</name>
        <dbReference type="ChEBI" id="CHEBI:49883"/>
    </ligand>
</feature>
<feature type="binding site" evidence="2">
    <location>
        <position position="76"/>
    </location>
    <ligand>
        <name>[4Fe-4S] cluster</name>
        <dbReference type="ChEBI" id="CHEBI:49883"/>
    </ligand>
</feature>
<feature type="modified residue" description="Phosphohistidine; by autocatalysis" evidence="3">
    <location>
        <position position="158"/>
    </location>
</feature>